<organism>
    <name type="scientific">Pseudomonas aeruginosa (strain ATCC 15692 / DSM 22644 / CIP 104116 / JCM 14847 / LMG 12228 / 1C / PRS 101 / PAO1)</name>
    <dbReference type="NCBI Taxonomy" id="208964"/>
    <lineage>
        <taxon>Bacteria</taxon>
        <taxon>Pseudomonadati</taxon>
        <taxon>Pseudomonadota</taxon>
        <taxon>Gammaproteobacteria</taxon>
        <taxon>Pseudomonadales</taxon>
        <taxon>Pseudomonadaceae</taxon>
        <taxon>Pseudomonas</taxon>
    </lineage>
</organism>
<sequence>MATIHVDGKTLEVDGADNLLQACLSLGLDIPYFCWHPALGSVGACRQCAVKQYTDENDKRGRLVMSCMTPATDNTWISIEDEEAKQFRASVVEWLMTNHPHDCPVCEEGGHCHLQDMTVMTGHNERRYRFTKRTHQNQELGPFIAHEMNRCIACYRCVRYYKDYAGGTDLGVYGAHDNVYFGRVEDGVLESEFSGNLTEVCPTGVFTDKTHSERYNRKWDMQFAPSICHGCSSGCNISPGERYGEIRRIENRYNGSVNHYFLCDRGRFGYGYVNREDRPRQPLLVLSKQKLSLDGALDQAAALLKERKVVGIGSPRASLESNFALRELVGEGNFYSGINEGELDRLRLILQVMQEGPLPVPSIRDIEDHDAVFVLGEDLTQTAARIALALRQSVKGKAVEMAADMKVQPWLDAAVKNIAQHAQNPLFIASVSATRLDDVAEETVHAAPDDLARLGFAVAHAIDPSAPSVADLDPQAQAFAQRITDALLAAKRPLVVSGNSLGNKALIEAAANIAKALKQREKNGSISLVVGEANSLGLALFGGDSVEAALERLTSGQADAVVVLENDLYRRTDAARVDAALAAAKVVIVADHQQTATTAKAHLVLPAASFAEGDGTLVSQEGRAQRFFQVFDPTYYDARNMVREGWRWLHAIHSTLQGKRVDWTQLDHVTEAVAEAKPILAGIRDAAPAASFRIKGLKLAREPHRYSGRTAMRANISVHEPRTPQDIDSAFAFSMEGYSGSQEDRQQIPFAWSPGWNSPQAWNKFQDEVGGHLRAGDPGVRLIEPKGEGLDWFQAVPVPFSAKADSWKVVPLYHLFGSEENSSRAAPIQQRIPETYVALSKEDADRLGVNDGATLGFQLKGQALRLPLRIDEQLGAGLIGLPVGFAGIPAAIAGCSVEGLQEAAQ</sequence>
<comment type="function">
    <text evidence="1">NDH-1 shuttles electrons from NADH, via FMN and iron-sulfur (Fe-S) centers, to quinones in the respiratory chain. The immediate electron acceptor for the enzyme in this species is believed to be ubiquinone. Couples the redox reaction to proton translocation (for every two electrons transferred, four hydrogen ions are translocated across the cytoplasmic membrane), and thus conserves the redox energy in a proton gradient (By similarity).</text>
</comment>
<comment type="catalytic activity">
    <reaction>
        <text>a quinone + NADH + 5 H(+)(in) = a quinol + NAD(+) + 4 H(+)(out)</text>
        <dbReference type="Rhea" id="RHEA:57888"/>
        <dbReference type="ChEBI" id="CHEBI:15378"/>
        <dbReference type="ChEBI" id="CHEBI:24646"/>
        <dbReference type="ChEBI" id="CHEBI:57540"/>
        <dbReference type="ChEBI" id="CHEBI:57945"/>
        <dbReference type="ChEBI" id="CHEBI:132124"/>
    </reaction>
</comment>
<comment type="cofactor">
    <cofactor evidence="1">
        <name>[2Fe-2S] cluster</name>
        <dbReference type="ChEBI" id="CHEBI:190135"/>
    </cofactor>
    <text evidence="1">Binds 1 [2Fe-2S] cluster per subunit.</text>
</comment>
<comment type="cofactor">
    <cofactor evidence="1">
        <name>[4Fe-4S] cluster</name>
        <dbReference type="ChEBI" id="CHEBI:49883"/>
    </cofactor>
    <text evidence="1">Binds 3 [4Fe-4S] clusters per subunit.</text>
</comment>
<comment type="subunit">
    <text>Composed of 13 different subunits. Subunits NuoCD, E, F, and G constitute the peripheral sector of the complex.</text>
</comment>
<comment type="similarity">
    <text evidence="6">Belongs to the complex I 75 kDa subunit family.</text>
</comment>
<dbReference type="EC" id="7.1.1.-"/>
<dbReference type="EMBL" id="AE004091">
    <property type="protein sequence ID" value="AAG06030.1"/>
    <property type="molecule type" value="Genomic_DNA"/>
</dbReference>
<dbReference type="PIR" id="G83314">
    <property type="entry name" value="G83314"/>
</dbReference>
<dbReference type="RefSeq" id="NP_251332.1">
    <property type="nucleotide sequence ID" value="NC_002516.2"/>
</dbReference>
<dbReference type="RefSeq" id="WP_003113377.1">
    <property type="nucleotide sequence ID" value="NZ_QZGE01000008.1"/>
</dbReference>
<dbReference type="SMR" id="Q9I0J6"/>
<dbReference type="FunCoup" id="Q9I0J6">
    <property type="interactions" value="497"/>
</dbReference>
<dbReference type="STRING" id="208964.PA2642"/>
<dbReference type="PaxDb" id="208964-PA2642"/>
<dbReference type="GeneID" id="882349"/>
<dbReference type="KEGG" id="pae:PA2642"/>
<dbReference type="PATRIC" id="fig|208964.12.peg.2765"/>
<dbReference type="PseudoCAP" id="PA2642"/>
<dbReference type="HOGENOM" id="CLU_000422_11_4_6"/>
<dbReference type="InParanoid" id="Q9I0J6"/>
<dbReference type="OrthoDB" id="9810782at2"/>
<dbReference type="PhylomeDB" id="Q9I0J6"/>
<dbReference type="BioCyc" id="PAER208964:G1FZ6-2682-MONOMER"/>
<dbReference type="PHI-base" id="PHI:11247"/>
<dbReference type="Proteomes" id="UP000002438">
    <property type="component" value="Chromosome"/>
</dbReference>
<dbReference type="GO" id="GO:0016020">
    <property type="term" value="C:membrane"/>
    <property type="evidence" value="ECO:0000318"/>
    <property type="project" value="GO_Central"/>
</dbReference>
<dbReference type="GO" id="GO:0051537">
    <property type="term" value="F:2 iron, 2 sulfur cluster binding"/>
    <property type="evidence" value="ECO:0007669"/>
    <property type="project" value="UniProtKB-KW"/>
</dbReference>
<dbReference type="GO" id="GO:0051539">
    <property type="term" value="F:4 iron, 4 sulfur cluster binding"/>
    <property type="evidence" value="ECO:0007669"/>
    <property type="project" value="UniProtKB-KW"/>
</dbReference>
<dbReference type="GO" id="GO:0046872">
    <property type="term" value="F:metal ion binding"/>
    <property type="evidence" value="ECO:0007669"/>
    <property type="project" value="UniProtKB-KW"/>
</dbReference>
<dbReference type="GO" id="GO:0008137">
    <property type="term" value="F:NADH dehydrogenase (ubiquinone) activity"/>
    <property type="evidence" value="ECO:0007669"/>
    <property type="project" value="InterPro"/>
</dbReference>
<dbReference type="GO" id="GO:0048038">
    <property type="term" value="F:quinone binding"/>
    <property type="evidence" value="ECO:0007669"/>
    <property type="project" value="UniProtKB-KW"/>
</dbReference>
<dbReference type="GO" id="GO:0042773">
    <property type="term" value="P:ATP synthesis coupled electron transport"/>
    <property type="evidence" value="ECO:0007669"/>
    <property type="project" value="InterPro"/>
</dbReference>
<dbReference type="GO" id="GO:0022904">
    <property type="term" value="P:respiratory electron transport chain"/>
    <property type="evidence" value="ECO:0000318"/>
    <property type="project" value="GO_Central"/>
</dbReference>
<dbReference type="CDD" id="cd00207">
    <property type="entry name" value="fer2"/>
    <property type="match status" value="1"/>
</dbReference>
<dbReference type="CDD" id="cd02788">
    <property type="entry name" value="MopB_CT_NDH-1_NuoG2-N7"/>
    <property type="match status" value="1"/>
</dbReference>
<dbReference type="CDD" id="cd02771">
    <property type="entry name" value="MopB_NDH-1_NuoG2-N7"/>
    <property type="match status" value="1"/>
</dbReference>
<dbReference type="FunFam" id="3.10.20.740:FF:000002">
    <property type="entry name" value="NADH-quinone oxidoreductase"/>
    <property type="match status" value="1"/>
</dbReference>
<dbReference type="FunFam" id="3.40.50.740:FF:000006">
    <property type="entry name" value="NADH-quinone oxidoreductase"/>
    <property type="match status" value="1"/>
</dbReference>
<dbReference type="Gene3D" id="3.10.20.740">
    <property type="match status" value="1"/>
</dbReference>
<dbReference type="Gene3D" id="3.30.200.210">
    <property type="match status" value="1"/>
</dbReference>
<dbReference type="Gene3D" id="3.40.50.740">
    <property type="match status" value="1"/>
</dbReference>
<dbReference type="InterPro" id="IPR036010">
    <property type="entry name" value="2Fe-2S_ferredoxin-like_sf"/>
</dbReference>
<dbReference type="InterPro" id="IPR001041">
    <property type="entry name" value="2Fe-2S_ferredoxin-type"/>
</dbReference>
<dbReference type="InterPro" id="IPR009010">
    <property type="entry name" value="Asp_de-COase-like_dom_sf"/>
</dbReference>
<dbReference type="InterPro" id="IPR006656">
    <property type="entry name" value="Mopterin_OxRdtase"/>
</dbReference>
<dbReference type="InterPro" id="IPR006963">
    <property type="entry name" value="Mopterin_OxRdtase_4Fe-4S_dom"/>
</dbReference>
<dbReference type="InterPro" id="IPR000283">
    <property type="entry name" value="NADH_UbQ_OxRdtase_75kDa_su_CS"/>
</dbReference>
<dbReference type="InterPro" id="IPR054351">
    <property type="entry name" value="NADH_UbQ_OxRdtase_ferredoxin"/>
</dbReference>
<dbReference type="InterPro" id="IPR010228">
    <property type="entry name" value="NADH_UbQ_OxRdtase_Gsu"/>
</dbReference>
<dbReference type="InterPro" id="IPR019574">
    <property type="entry name" value="NADH_UbQ_OxRdtase_Gsu_4Fe4S-bd"/>
</dbReference>
<dbReference type="InterPro" id="IPR050123">
    <property type="entry name" value="Prok_molybdopt-oxidoreductase"/>
</dbReference>
<dbReference type="NCBIfam" id="TIGR01973">
    <property type="entry name" value="NuoG"/>
    <property type="match status" value="1"/>
</dbReference>
<dbReference type="PANTHER" id="PTHR43105:SF10">
    <property type="entry name" value="NADH-QUINONE OXIDOREDUCTASE SUBUNIT G"/>
    <property type="match status" value="1"/>
</dbReference>
<dbReference type="PANTHER" id="PTHR43105">
    <property type="entry name" value="RESPIRATORY NITRATE REDUCTASE"/>
    <property type="match status" value="1"/>
</dbReference>
<dbReference type="Pfam" id="PF13510">
    <property type="entry name" value="Fer2_4"/>
    <property type="match status" value="1"/>
</dbReference>
<dbReference type="Pfam" id="PF22117">
    <property type="entry name" value="Fer4_Nqo3"/>
    <property type="match status" value="1"/>
</dbReference>
<dbReference type="Pfam" id="PF04879">
    <property type="entry name" value="Molybdop_Fe4S4"/>
    <property type="match status" value="1"/>
</dbReference>
<dbReference type="Pfam" id="PF00384">
    <property type="entry name" value="Molybdopterin"/>
    <property type="match status" value="1"/>
</dbReference>
<dbReference type="Pfam" id="PF10588">
    <property type="entry name" value="NADH-G_4Fe-4S_3"/>
    <property type="match status" value="1"/>
</dbReference>
<dbReference type="SMART" id="SM00926">
    <property type="entry name" value="Molybdop_Fe4S4"/>
    <property type="match status" value="1"/>
</dbReference>
<dbReference type="SMART" id="SM00929">
    <property type="entry name" value="NADH-G_4Fe-4S_3"/>
    <property type="match status" value="1"/>
</dbReference>
<dbReference type="SUPFAM" id="SSF54292">
    <property type="entry name" value="2Fe-2S ferredoxin-like"/>
    <property type="match status" value="1"/>
</dbReference>
<dbReference type="SUPFAM" id="SSF54862">
    <property type="entry name" value="4Fe-4S ferredoxins"/>
    <property type="match status" value="1"/>
</dbReference>
<dbReference type="SUPFAM" id="SSF50692">
    <property type="entry name" value="ADC-like"/>
    <property type="match status" value="1"/>
</dbReference>
<dbReference type="SUPFAM" id="SSF53706">
    <property type="entry name" value="Formate dehydrogenase/DMSO reductase, domains 1-3"/>
    <property type="match status" value="1"/>
</dbReference>
<dbReference type="PROSITE" id="PS51085">
    <property type="entry name" value="2FE2S_FER_2"/>
    <property type="match status" value="1"/>
</dbReference>
<dbReference type="PROSITE" id="PS51839">
    <property type="entry name" value="4FE4S_HC3"/>
    <property type="match status" value="1"/>
</dbReference>
<dbReference type="PROSITE" id="PS51669">
    <property type="entry name" value="4FE4S_MOW_BIS_MGD"/>
    <property type="match status" value="1"/>
</dbReference>
<dbReference type="PROSITE" id="PS00641">
    <property type="entry name" value="COMPLEX1_75K_1"/>
    <property type="match status" value="1"/>
</dbReference>
<dbReference type="PROSITE" id="PS00642">
    <property type="entry name" value="COMPLEX1_75K_2"/>
    <property type="match status" value="1"/>
</dbReference>
<dbReference type="PROSITE" id="PS00643">
    <property type="entry name" value="COMPLEX1_75K_3"/>
    <property type="match status" value="1"/>
</dbReference>
<protein>
    <recommendedName>
        <fullName>NADH-quinone oxidoreductase subunit G</fullName>
        <ecNumber>7.1.1.-</ecNumber>
    </recommendedName>
    <alternativeName>
        <fullName>NADH dehydrogenase I subunit G</fullName>
    </alternativeName>
    <alternativeName>
        <fullName>NDH-1 subunit G</fullName>
    </alternativeName>
</protein>
<proteinExistence type="inferred from homology"/>
<name>NUOG_PSEAE</name>
<evidence type="ECO:0000250" key="1"/>
<evidence type="ECO:0000255" key="2"/>
<evidence type="ECO:0000255" key="3">
    <source>
        <dbReference type="PROSITE-ProRule" id="PRU00465"/>
    </source>
</evidence>
<evidence type="ECO:0000255" key="4">
    <source>
        <dbReference type="PROSITE-ProRule" id="PRU01004"/>
    </source>
</evidence>
<evidence type="ECO:0000255" key="5">
    <source>
        <dbReference type="PROSITE-ProRule" id="PRU01184"/>
    </source>
</evidence>
<evidence type="ECO:0000305" key="6"/>
<keyword id="KW-0001">2Fe-2S</keyword>
<keyword id="KW-0004">4Fe-4S</keyword>
<keyword id="KW-0408">Iron</keyword>
<keyword id="KW-0411">Iron-sulfur</keyword>
<keyword id="KW-0479">Metal-binding</keyword>
<keyword id="KW-0520">NAD</keyword>
<keyword id="KW-0874">Quinone</keyword>
<keyword id="KW-1185">Reference proteome</keyword>
<keyword id="KW-1278">Translocase</keyword>
<keyword id="KW-0830">Ubiquinone</keyword>
<reference key="1">
    <citation type="journal article" date="2000" name="Nature">
        <title>Complete genome sequence of Pseudomonas aeruginosa PAO1, an opportunistic pathogen.</title>
        <authorList>
            <person name="Stover C.K."/>
            <person name="Pham X.-Q.T."/>
            <person name="Erwin A.L."/>
            <person name="Mizoguchi S.D."/>
            <person name="Warrener P."/>
            <person name="Hickey M.J."/>
            <person name="Brinkman F.S.L."/>
            <person name="Hufnagle W.O."/>
            <person name="Kowalik D.J."/>
            <person name="Lagrou M."/>
            <person name="Garber R.L."/>
            <person name="Goltry L."/>
            <person name="Tolentino E."/>
            <person name="Westbrock-Wadman S."/>
            <person name="Yuan Y."/>
            <person name="Brody L.L."/>
            <person name="Coulter S.N."/>
            <person name="Folger K.R."/>
            <person name="Kas A."/>
            <person name="Larbig K."/>
            <person name="Lim R.M."/>
            <person name="Smith K.A."/>
            <person name="Spencer D.H."/>
            <person name="Wong G.K.-S."/>
            <person name="Wu Z."/>
            <person name="Paulsen I.T."/>
            <person name="Reizer J."/>
            <person name="Saier M.H. Jr."/>
            <person name="Hancock R.E.W."/>
            <person name="Lory S."/>
            <person name="Olson M.V."/>
        </authorList>
    </citation>
    <scope>NUCLEOTIDE SEQUENCE [LARGE SCALE GENOMIC DNA]</scope>
    <source>
        <strain>ATCC 15692 / DSM 22644 / CIP 104116 / JCM 14847 / LMG 12228 / 1C / PRS 101 / PAO1</strain>
    </source>
</reference>
<feature type="chain" id="PRO_0000118549" description="NADH-quinone oxidoreductase subunit G">
    <location>
        <begin position="1"/>
        <end position="905"/>
    </location>
</feature>
<feature type="domain" description="2Fe-2S ferredoxin-type" evidence="3">
    <location>
        <begin position="1"/>
        <end position="83"/>
    </location>
</feature>
<feature type="domain" description="4Fe-4S His(Cys)3-ligated-type" evidence="5">
    <location>
        <begin position="83"/>
        <end position="122"/>
    </location>
</feature>
<feature type="domain" description="4Fe-4S Mo/W bis-MGD-type" evidence="4">
    <location>
        <begin position="221"/>
        <end position="277"/>
    </location>
</feature>
<feature type="binding site" evidence="1">
    <location>
        <position position="34"/>
    </location>
    <ligand>
        <name>[2Fe-2S] cluster</name>
        <dbReference type="ChEBI" id="CHEBI:190135"/>
    </ligand>
</feature>
<feature type="binding site" evidence="1">
    <location>
        <position position="45"/>
    </location>
    <ligand>
        <name>[2Fe-2S] cluster</name>
        <dbReference type="ChEBI" id="CHEBI:190135"/>
    </ligand>
</feature>
<feature type="binding site" evidence="1">
    <location>
        <position position="48"/>
    </location>
    <ligand>
        <name>[2Fe-2S] cluster</name>
        <dbReference type="ChEBI" id="CHEBI:190135"/>
    </ligand>
</feature>
<feature type="binding site" evidence="1">
    <location>
        <position position="67"/>
    </location>
    <ligand>
        <name>[2Fe-2S] cluster</name>
        <dbReference type="ChEBI" id="CHEBI:190135"/>
    </ligand>
</feature>
<feature type="binding site" evidence="5">
    <location>
        <position position="99"/>
    </location>
    <ligand>
        <name>[4Fe-4S] cluster</name>
        <dbReference type="ChEBI" id="CHEBI:49883"/>
        <label>1</label>
    </ligand>
</feature>
<feature type="binding site" evidence="5">
    <location>
        <position position="103"/>
    </location>
    <ligand>
        <name>[4Fe-4S] cluster</name>
        <dbReference type="ChEBI" id="CHEBI:49883"/>
        <label>1</label>
    </ligand>
</feature>
<feature type="binding site" evidence="5">
    <location>
        <position position="106"/>
    </location>
    <ligand>
        <name>[4Fe-4S] cluster</name>
        <dbReference type="ChEBI" id="CHEBI:49883"/>
        <label>1</label>
    </ligand>
</feature>
<feature type="binding site" evidence="5">
    <location>
        <position position="112"/>
    </location>
    <ligand>
        <name>[4Fe-4S] cluster</name>
        <dbReference type="ChEBI" id="CHEBI:49883"/>
        <label>1</label>
    </ligand>
</feature>
<feature type="binding site" evidence="1">
    <location>
        <position position="151"/>
    </location>
    <ligand>
        <name>[4Fe-4S] cluster</name>
        <dbReference type="ChEBI" id="CHEBI:49883"/>
        <label>2</label>
    </ligand>
</feature>
<feature type="binding site" evidence="1">
    <location>
        <position position="154"/>
    </location>
    <ligand>
        <name>[4Fe-4S] cluster</name>
        <dbReference type="ChEBI" id="CHEBI:49883"/>
        <label>2</label>
    </ligand>
</feature>
<feature type="binding site" evidence="1">
    <location>
        <position position="157"/>
    </location>
    <ligand>
        <name>[4Fe-4S] cluster</name>
        <dbReference type="ChEBI" id="CHEBI:49883"/>
        <label>2</label>
    </ligand>
</feature>
<feature type="binding site" evidence="1">
    <location>
        <position position="201"/>
    </location>
    <ligand>
        <name>[4Fe-4S] cluster</name>
        <dbReference type="ChEBI" id="CHEBI:49883"/>
        <label>2</label>
    </ligand>
</feature>
<feature type="binding site" evidence="2">
    <location>
        <position position="228"/>
    </location>
    <ligand>
        <name>[4Fe-4S] cluster</name>
        <dbReference type="ChEBI" id="CHEBI:49883"/>
        <label>3</label>
    </ligand>
</feature>
<feature type="binding site" evidence="2">
    <location>
        <position position="231"/>
    </location>
    <ligand>
        <name>[4Fe-4S] cluster</name>
        <dbReference type="ChEBI" id="CHEBI:49883"/>
        <label>3</label>
    </ligand>
</feature>
<feature type="binding site" evidence="2">
    <location>
        <position position="235"/>
    </location>
    <ligand>
        <name>[4Fe-4S] cluster</name>
        <dbReference type="ChEBI" id="CHEBI:49883"/>
        <label>3</label>
    </ligand>
</feature>
<feature type="binding site" evidence="2">
    <location>
        <position position="263"/>
    </location>
    <ligand>
        <name>[4Fe-4S] cluster</name>
        <dbReference type="ChEBI" id="CHEBI:49883"/>
        <label>3</label>
    </ligand>
</feature>
<accession>Q9I0J6</accession>
<gene>
    <name type="primary">nuoG</name>
    <name type="ordered locus">PA2642</name>
</gene>